<accession>Q9UT66</accession>
<dbReference type="EMBL" id="CU329672">
    <property type="protein sequence ID" value="CAB55771.1"/>
    <property type="molecule type" value="Genomic_DNA"/>
</dbReference>
<dbReference type="PIR" id="T41356">
    <property type="entry name" value="T41356"/>
</dbReference>
<dbReference type="RefSeq" id="NP_588404.1">
    <property type="nucleotide sequence ID" value="NM_001023395.2"/>
</dbReference>
<dbReference type="PaxDb" id="4896-SPCC4F11.05.1"/>
<dbReference type="EnsemblFungi" id="SPCC4F11.05.1">
    <property type="protein sequence ID" value="SPCC4F11.05.1:pep"/>
    <property type="gene ID" value="SPCC4F11.05"/>
</dbReference>
<dbReference type="KEGG" id="spo:2539512"/>
<dbReference type="PomBase" id="SPCC4F11.05"/>
<dbReference type="VEuPathDB" id="FungiDB:SPCC4F11.05"/>
<dbReference type="HOGENOM" id="CLU_2591159_0_0_1"/>
<dbReference type="InParanoid" id="Q9UT66"/>
<dbReference type="PRO" id="PR:Q9UT66"/>
<dbReference type="Proteomes" id="UP000002485">
    <property type="component" value="Chromosome III"/>
</dbReference>
<gene>
    <name type="ORF">SPCC4F11.05</name>
</gene>
<feature type="chain" id="PRO_0000116887" description="Uncharacterized protein C4F11.05">
    <location>
        <begin position="1"/>
        <end position="80"/>
    </location>
</feature>
<name>YQA5_SCHPO</name>
<protein>
    <recommendedName>
        <fullName>Uncharacterized protein C4F11.05</fullName>
    </recommendedName>
</protein>
<sequence>MEIDLLSFSIKRILNLSAFIHIYSRYFRPDTFLSSKQSITMSVKKPYKHPNCTSVIHINRVAIVIEQEKGKKSKQNLIPS</sequence>
<proteinExistence type="predicted"/>
<keyword id="KW-1185">Reference proteome</keyword>
<organism>
    <name type="scientific">Schizosaccharomyces pombe (strain 972 / ATCC 24843)</name>
    <name type="common">Fission yeast</name>
    <dbReference type="NCBI Taxonomy" id="284812"/>
    <lineage>
        <taxon>Eukaryota</taxon>
        <taxon>Fungi</taxon>
        <taxon>Dikarya</taxon>
        <taxon>Ascomycota</taxon>
        <taxon>Taphrinomycotina</taxon>
        <taxon>Schizosaccharomycetes</taxon>
        <taxon>Schizosaccharomycetales</taxon>
        <taxon>Schizosaccharomycetaceae</taxon>
        <taxon>Schizosaccharomyces</taxon>
    </lineage>
</organism>
<reference key="1">
    <citation type="journal article" date="2002" name="Nature">
        <title>The genome sequence of Schizosaccharomyces pombe.</title>
        <authorList>
            <person name="Wood V."/>
            <person name="Gwilliam R."/>
            <person name="Rajandream M.A."/>
            <person name="Lyne M.H."/>
            <person name="Lyne R."/>
            <person name="Stewart A."/>
            <person name="Sgouros J.G."/>
            <person name="Peat N."/>
            <person name="Hayles J."/>
            <person name="Baker S.G."/>
            <person name="Basham D."/>
            <person name="Bowman S."/>
            <person name="Brooks K."/>
            <person name="Brown D."/>
            <person name="Brown S."/>
            <person name="Chillingworth T."/>
            <person name="Churcher C.M."/>
            <person name="Collins M."/>
            <person name="Connor R."/>
            <person name="Cronin A."/>
            <person name="Davis P."/>
            <person name="Feltwell T."/>
            <person name="Fraser A."/>
            <person name="Gentles S."/>
            <person name="Goble A."/>
            <person name="Hamlin N."/>
            <person name="Harris D.E."/>
            <person name="Hidalgo J."/>
            <person name="Hodgson G."/>
            <person name="Holroyd S."/>
            <person name="Hornsby T."/>
            <person name="Howarth S."/>
            <person name="Huckle E.J."/>
            <person name="Hunt S."/>
            <person name="Jagels K."/>
            <person name="James K.D."/>
            <person name="Jones L."/>
            <person name="Jones M."/>
            <person name="Leather S."/>
            <person name="McDonald S."/>
            <person name="McLean J."/>
            <person name="Mooney P."/>
            <person name="Moule S."/>
            <person name="Mungall K.L."/>
            <person name="Murphy L.D."/>
            <person name="Niblett D."/>
            <person name="Odell C."/>
            <person name="Oliver K."/>
            <person name="O'Neil S."/>
            <person name="Pearson D."/>
            <person name="Quail M.A."/>
            <person name="Rabbinowitsch E."/>
            <person name="Rutherford K.M."/>
            <person name="Rutter S."/>
            <person name="Saunders D."/>
            <person name="Seeger K."/>
            <person name="Sharp S."/>
            <person name="Skelton J."/>
            <person name="Simmonds M.N."/>
            <person name="Squares R."/>
            <person name="Squares S."/>
            <person name="Stevens K."/>
            <person name="Taylor K."/>
            <person name="Taylor R.G."/>
            <person name="Tivey A."/>
            <person name="Walsh S.V."/>
            <person name="Warren T."/>
            <person name="Whitehead S."/>
            <person name="Woodward J.R."/>
            <person name="Volckaert G."/>
            <person name="Aert R."/>
            <person name="Robben J."/>
            <person name="Grymonprez B."/>
            <person name="Weltjens I."/>
            <person name="Vanstreels E."/>
            <person name="Rieger M."/>
            <person name="Schaefer M."/>
            <person name="Mueller-Auer S."/>
            <person name="Gabel C."/>
            <person name="Fuchs M."/>
            <person name="Duesterhoeft A."/>
            <person name="Fritzc C."/>
            <person name="Holzer E."/>
            <person name="Moestl D."/>
            <person name="Hilbert H."/>
            <person name="Borzym K."/>
            <person name="Langer I."/>
            <person name="Beck A."/>
            <person name="Lehrach H."/>
            <person name="Reinhardt R."/>
            <person name="Pohl T.M."/>
            <person name="Eger P."/>
            <person name="Zimmermann W."/>
            <person name="Wedler H."/>
            <person name="Wambutt R."/>
            <person name="Purnelle B."/>
            <person name="Goffeau A."/>
            <person name="Cadieu E."/>
            <person name="Dreano S."/>
            <person name="Gloux S."/>
            <person name="Lelaure V."/>
            <person name="Mottier S."/>
            <person name="Galibert F."/>
            <person name="Aves S.J."/>
            <person name="Xiang Z."/>
            <person name="Hunt C."/>
            <person name="Moore K."/>
            <person name="Hurst S.M."/>
            <person name="Lucas M."/>
            <person name="Rochet M."/>
            <person name="Gaillardin C."/>
            <person name="Tallada V.A."/>
            <person name="Garzon A."/>
            <person name="Thode G."/>
            <person name="Daga R.R."/>
            <person name="Cruzado L."/>
            <person name="Jimenez J."/>
            <person name="Sanchez M."/>
            <person name="del Rey F."/>
            <person name="Benito J."/>
            <person name="Dominguez A."/>
            <person name="Revuelta J.L."/>
            <person name="Moreno S."/>
            <person name="Armstrong J."/>
            <person name="Forsburg S.L."/>
            <person name="Cerutti L."/>
            <person name="Lowe T."/>
            <person name="McCombie W.R."/>
            <person name="Paulsen I."/>
            <person name="Potashkin J."/>
            <person name="Shpakovski G.V."/>
            <person name="Ussery D."/>
            <person name="Barrell B.G."/>
            <person name="Nurse P."/>
        </authorList>
    </citation>
    <scope>NUCLEOTIDE SEQUENCE [LARGE SCALE GENOMIC DNA]</scope>
    <source>
        <strain>972 / ATCC 24843</strain>
    </source>
</reference>